<accession>Q5WNX2</accession>
<protein>
    <recommendedName>
        <fullName evidence="1">Undecaprenyl-diphosphatase</fullName>
        <ecNumber evidence="1">3.6.1.27</ecNumber>
    </recommendedName>
    <alternativeName>
        <fullName evidence="1">Bacitracin resistance protein</fullName>
    </alternativeName>
    <alternativeName>
        <fullName evidence="1">Undecaprenyl pyrophosphate phosphatase</fullName>
    </alternativeName>
</protein>
<gene>
    <name evidence="1" type="primary">uppP</name>
    <name evidence="4" type="synonym">bcrD</name>
</gene>
<geneLocation type="plasmid">
    <name>pJM01</name>
</geneLocation>
<comment type="function">
    <text evidence="1">Catalyzes the dephosphorylation of undecaprenyl diphosphate (UPP). Confers resistance to bacitracin.</text>
</comment>
<comment type="catalytic activity">
    <reaction evidence="1">
        <text>di-trans,octa-cis-undecaprenyl diphosphate + H2O = di-trans,octa-cis-undecaprenyl phosphate + phosphate + H(+)</text>
        <dbReference type="Rhea" id="RHEA:28094"/>
        <dbReference type="ChEBI" id="CHEBI:15377"/>
        <dbReference type="ChEBI" id="CHEBI:15378"/>
        <dbReference type="ChEBI" id="CHEBI:43474"/>
        <dbReference type="ChEBI" id="CHEBI:58405"/>
        <dbReference type="ChEBI" id="CHEBI:60392"/>
        <dbReference type="EC" id="3.6.1.27"/>
    </reaction>
</comment>
<comment type="subcellular location">
    <subcellularLocation>
        <location evidence="1">Cell membrane</location>
        <topology evidence="1">Multi-pass membrane protein</topology>
    </subcellularLocation>
</comment>
<comment type="induction">
    <text evidence="2 3">Transcription is activated by the regulatory protein BcrR in the presence of bacitracin.</text>
</comment>
<comment type="miscellaneous">
    <text evidence="1">Bacitracin is thought to be involved in the inhibition of peptidoglycan synthesis by sequestering undecaprenyl diphosphate, thereby reducing the pool of lipid carrier available.</text>
</comment>
<comment type="similarity">
    <text evidence="1">Belongs to the UppP family.</text>
</comment>
<name>UPPP2_ENTFL</name>
<feature type="chain" id="PRO_0000151150" description="Undecaprenyl-diphosphatase">
    <location>
        <begin position="1"/>
        <end position="276"/>
    </location>
</feature>
<feature type="transmembrane region" description="Helical" evidence="1">
    <location>
        <begin position="6"/>
        <end position="26"/>
    </location>
</feature>
<feature type="transmembrane region" description="Helical" evidence="1">
    <location>
        <begin position="49"/>
        <end position="69"/>
    </location>
</feature>
<feature type="transmembrane region" description="Helical" evidence="1">
    <location>
        <begin position="89"/>
        <end position="109"/>
    </location>
</feature>
<feature type="transmembrane region" description="Helical" evidence="1">
    <location>
        <begin position="117"/>
        <end position="137"/>
    </location>
</feature>
<feature type="transmembrane region" description="Helical" evidence="1">
    <location>
        <begin position="151"/>
        <end position="171"/>
    </location>
</feature>
<feature type="transmembrane region" description="Helical" evidence="1">
    <location>
        <begin position="181"/>
        <end position="201"/>
    </location>
</feature>
<feature type="transmembrane region" description="Helical" evidence="1">
    <location>
        <begin position="224"/>
        <end position="244"/>
    </location>
</feature>
<feature type="transmembrane region" description="Helical" evidence="1">
    <location>
        <begin position="256"/>
        <end position="276"/>
    </location>
</feature>
<sequence length="276" mass="30622">MALDFIEILKVIFLGIVEGITEWLPISSTGHMLLVDEFITLNMSEAFKEMFFVVIQLGAILAVVVMFWNKMFPFQFKNKSQSIIKKDTFSLWFKVAVACVPSAIMGILFDDYLDAHLHTPVVIAIMLILYGVLFIVIENRNKKRTATTSTLADISYKTALMIGVFQVLSLIPGTSRSGATIIGALLIGVSRVAAAEFTFFLAVPTMLGASAFKLLKFGFDFTSAELLTLVIGMAVAFAVSVFVIKFLMSYIKKHDFKVFGWYRIVLGILVLLITAI</sequence>
<dbReference type="EC" id="3.6.1.27" evidence="1"/>
<dbReference type="EMBL" id="AY496968">
    <property type="protein sequence ID" value="AAS78449.1"/>
    <property type="molecule type" value="Genomic_DNA"/>
</dbReference>
<dbReference type="RefSeq" id="WP_002367748.1">
    <property type="nucleotide sequence ID" value="NC_014726.1"/>
</dbReference>
<dbReference type="RefSeq" id="YP_004032990.1">
    <property type="nucleotide sequence ID" value="NC_014726.1"/>
</dbReference>
<dbReference type="SMR" id="Q5WNX2"/>
<dbReference type="BRENDA" id="3.6.1.27">
    <property type="organism ID" value="2095"/>
</dbReference>
<dbReference type="GO" id="GO:0005886">
    <property type="term" value="C:plasma membrane"/>
    <property type="evidence" value="ECO:0007669"/>
    <property type="project" value="UniProtKB-SubCell"/>
</dbReference>
<dbReference type="GO" id="GO:0050380">
    <property type="term" value="F:undecaprenyl-diphosphatase activity"/>
    <property type="evidence" value="ECO:0007669"/>
    <property type="project" value="UniProtKB-UniRule"/>
</dbReference>
<dbReference type="GO" id="GO:0071555">
    <property type="term" value="P:cell wall organization"/>
    <property type="evidence" value="ECO:0007669"/>
    <property type="project" value="UniProtKB-KW"/>
</dbReference>
<dbReference type="GO" id="GO:0009252">
    <property type="term" value="P:peptidoglycan biosynthetic process"/>
    <property type="evidence" value="ECO:0007669"/>
    <property type="project" value="UniProtKB-KW"/>
</dbReference>
<dbReference type="GO" id="GO:0008360">
    <property type="term" value="P:regulation of cell shape"/>
    <property type="evidence" value="ECO:0007669"/>
    <property type="project" value="UniProtKB-KW"/>
</dbReference>
<dbReference type="GO" id="GO:0046677">
    <property type="term" value="P:response to antibiotic"/>
    <property type="evidence" value="ECO:0007669"/>
    <property type="project" value="UniProtKB-UniRule"/>
</dbReference>
<dbReference type="HAMAP" id="MF_01006">
    <property type="entry name" value="Undec_diphosphatase"/>
    <property type="match status" value="1"/>
</dbReference>
<dbReference type="InterPro" id="IPR003824">
    <property type="entry name" value="UppP"/>
</dbReference>
<dbReference type="NCBIfam" id="NF001389">
    <property type="entry name" value="PRK00281.1-2"/>
    <property type="match status" value="1"/>
</dbReference>
<dbReference type="NCBIfam" id="NF001390">
    <property type="entry name" value="PRK00281.1-4"/>
    <property type="match status" value="1"/>
</dbReference>
<dbReference type="NCBIfam" id="NF001391">
    <property type="entry name" value="PRK00281.1-5"/>
    <property type="match status" value="1"/>
</dbReference>
<dbReference type="NCBIfam" id="TIGR00753">
    <property type="entry name" value="undec_PP_bacA"/>
    <property type="match status" value="1"/>
</dbReference>
<dbReference type="PANTHER" id="PTHR30622">
    <property type="entry name" value="UNDECAPRENYL-DIPHOSPHATASE"/>
    <property type="match status" value="1"/>
</dbReference>
<dbReference type="PANTHER" id="PTHR30622:SF3">
    <property type="entry name" value="UNDECAPRENYL-DIPHOSPHATASE"/>
    <property type="match status" value="1"/>
</dbReference>
<dbReference type="Pfam" id="PF02673">
    <property type="entry name" value="BacA"/>
    <property type="match status" value="1"/>
</dbReference>
<reference key="1">
    <citation type="journal article" date="2004" name="Antimicrob. Agents Chemother.">
        <title>Acquired bacitracin resistance in Enterococcus faecalis is mediated by an ABC transporter and a novel regulatory protein, BcrR.</title>
        <authorList>
            <person name="Manson J.M."/>
            <person name="Keis S."/>
            <person name="Smith J.M.B."/>
            <person name="Cook G.M."/>
        </authorList>
    </citation>
    <scope>NUCLEOTIDE SEQUENCE [GENOMIC DNA]</scope>
    <scope>INDUCTION</scope>
    <source>
        <strain>AR01/DGVS</strain>
    </source>
</reference>
<reference key="2">
    <citation type="journal article" date="2008" name="J. Biol. Chem.">
        <title>Molecular analysis of BcrR, a membrane-bound bacitracin sensor and DNA-binding protein from Enterococcus faecalis.</title>
        <authorList>
            <person name="Gauntlett J.C."/>
            <person name="Gebhard S."/>
            <person name="Keis S."/>
            <person name="Manson J.M."/>
            <person name="Pos K.M."/>
            <person name="Cook G.M."/>
        </authorList>
    </citation>
    <scope>INDUCTION</scope>
    <source>
        <strain>AR01/DGVS</strain>
    </source>
</reference>
<evidence type="ECO:0000255" key="1">
    <source>
        <dbReference type="HAMAP-Rule" id="MF_01006"/>
    </source>
</evidence>
<evidence type="ECO:0000269" key="2">
    <source>
    </source>
</evidence>
<evidence type="ECO:0000269" key="3">
    <source>
    </source>
</evidence>
<evidence type="ECO:0000303" key="4">
    <source>
    </source>
</evidence>
<keyword id="KW-0046">Antibiotic resistance</keyword>
<keyword id="KW-1003">Cell membrane</keyword>
<keyword id="KW-0133">Cell shape</keyword>
<keyword id="KW-0961">Cell wall biogenesis/degradation</keyword>
<keyword id="KW-0378">Hydrolase</keyword>
<keyword id="KW-0472">Membrane</keyword>
<keyword id="KW-0573">Peptidoglycan synthesis</keyword>
<keyword id="KW-0614">Plasmid</keyword>
<keyword id="KW-0812">Transmembrane</keyword>
<keyword id="KW-1133">Transmembrane helix</keyword>
<proteinExistence type="evidence at transcript level"/>
<organism>
    <name type="scientific">Enterococcus faecalis</name>
    <name type="common">Streptococcus faecalis</name>
    <dbReference type="NCBI Taxonomy" id="1351"/>
    <lineage>
        <taxon>Bacteria</taxon>
        <taxon>Bacillati</taxon>
        <taxon>Bacillota</taxon>
        <taxon>Bacilli</taxon>
        <taxon>Lactobacillales</taxon>
        <taxon>Enterococcaceae</taxon>
        <taxon>Enterococcus</taxon>
    </lineage>
</organism>